<reference key="1">
    <citation type="journal article" date="2007" name="ISME J.">
        <title>Population level functional diversity in a microbial community revealed by comparative genomic and metagenomic analyses.</title>
        <authorList>
            <person name="Bhaya D."/>
            <person name="Grossman A.R."/>
            <person name="Steunou A.-S."/>
            <person name="Khuri N."/>
            <person name="Cohan F.M."/>
            <person name="Hamamura N."/>
            <person name="Melendrez M.C."/>
            <person name="Bateson M.M."/>
            <person name="Ward D.M."/>
            <person name="Heidelberg J.F."/>
        </authorList>
    </citation>
    <scope>NUCLEOTIDE SEQUENCE [LARGE SCALE GENOMIC DNA]</scope>
    <source>
        <strain>JA-2-3B'a(2-13)</strain>
    </source>
</reference>
<reference key="2">
    <citation type="journal article" date="2010" name="Nature">
        <title>Structure of a bacterial homologue of vitamin K epoxide reductase.</title>
        <authorList>
            <person name="Li W."/>
            <person name="Schulman S."/>
            <person name="Dutton R.J."/>
            <person name="Boyd D."/>
            <person name="Beckwith J."/>
            <person name="Rapoport T.A."/>
        </authorList>
    </citation>
    <scope>X-RAY CRYSTALLOGRAPHY (1.66 ANGSTROMS) OF MUTANT SER-56 IN COMPLEX WITH UBIQUINONE</scope>
    <scope>SUBCELLULAR LOCATION</scope>
    <scope>TOPOLOGY</scope>
    <scope>DISULFIDE BOND</scope>
    <scope>FUNCTION</scope>
    <scope>MUTAGENESIS OF CYS-50; CYS-56; CYS-130; CYS-133; CYS-209 AND CYS-212</scope>
    <scope>ACTIVITY REGULATION</scope>
    <scope>REDOX-ACTIVE SITE</scope>
    <scope>REGION</scope>
</reference>
<reference key="3">
    <citation type="journal article" date="2014" name="Nat. Commun.">
        <title>Structures of an intramembrane vitamin K epoxide reductase homolog reveal control mechanisms for electron transfer.</title>
        <authorList>
            <person name="Liu S."/>
            <person name="Cheng W."/>
            <person name="Fowle Grider R."/>
            <person name="Shen G."/>
            <person name="Li W."/>
        </authorList>
    </citation>
    <scope>X-RAY CRYSTALLOGRAPHY (2.79 ANGSTROMS) OF 186-283 OF MUTANTS ALA-50 AND ALA-212 IN COMPLEX WITH UBIQUINONE</scope>
    <scope>FUNCTION</scope>
    <scope>SUBCELLULAR LOCATION</scope>
    <scope>TOPOLOGY</scope>
    <scope>MUTAGENESIS OF LYS-41; CYS-50; LEU-60; CYS-130 AND CYS-212</scope>
    <scope>REDOX-ACTIVE SITE</scope>
    <scope>SITE</scope>
    <scope>THIOREDOXIN-LIKE REGION</scope>
</reference>
<name>VKOR_SYNJB</name>
<feature type="chain" id="PRO_0000429265" description="Vitamin K epoxide reductase homolog">
    <location>
        <begin position="1"/>
        <end position="283"/>
    </location>
</feature>
<feature type="topological domain" description="Cytoplasmic">
    <location>
        <begin position="1"/>
        <end position="20"/>
    </location>
</feature>
<feature type="transmembrane region" description="Helical">
    <location>
        <begin position="21"/>
        <end position="41"/>
    </location>
</feature>
<feature type="topological domain" description="Periplasmic">
    <location>
        <begin position="42"/>
        <end position="66"/>
    </location>
</feature>
<feature type="transmembrane region" description="Helical">
    <location>
        <begin position="67"/>
        <end position="87"/>
    </location>
</feature>
<feature type="topological domain" description="Cytoplasmic">
    <location>
        <begin position="88"/>
        <end position="102"/>
    </location>
</feature>
<feature type="transmembrane region" description="Helical">
    <location>
        <begin position="103"/>
        <end position="123"/>
    </location>
</feature>
<feature type="topological domain" description="Periplasmic">
    <location>
        <begin position="124"/>
        <end position="128"/>
    </location>
</feature>
<feature type="transmembrane region" description="Helical">
    <location>
        <begin position="129"/>
        <end position="149"/>
    </location>
</feature>
<feature type="topological domain" description="Cytoplasmic">
    <location>
        <begin position="150"/>
        <end position="158"/>
    </location>
</feature>
<feature type="transmembrane region" description="Helical">
    <location>
        <begin position="159"/>
        <end position="179"/>
    </location>
</feature>
<feature type="topological domain" description="Periplasmic">
    <location>
        <begin position="180"/>
        <end position="283"/>
    </location>
</feature>
<feature type="region of interest" description="Thioredoxin-like domain">
    <location>
        <begin position="186"/>
        <end position="283"/>
    </location>
</feature>
<feature type="binding site">
    <location>
        <begin position="59"/>
        <end position="65"/>
    </location>
    <ligand>
        <name>a quinone</name>
        <dbReference type="ChEBI" id="CHEBI:132124"/>
    </ligand>
</feature>
<feature type="binding site">
    <location>
        <begin position="111"/>
        <end position="122"/>
    </location>
    <ligand>
        <name>a quinone</name>
        <dbReference type="ChEBI" id="CHEBI:132124"/>
    </ligand>
</feature>
<feature type="site" description="Important for the reduction of the redox-active Cys-130 and Cys-133">
    <location>
        <position position="50"/>
    </location>
</feature>
<feature type="site" description="Important for the reduction of the redox-active Cys-130 and Cys-133">
    <location>
        <position position="56"/>
    </location>
</feature>
<feature type="site" description="Important for the reduction of the redox-active Cys-130 and Cys-133">
    <location>
        <position position="209"/>
    </location>
</feature>
<feature type="site" description="Important for the reduction of the redox-active Cys-130 and Cys-133">
    <location>
        <position position="212"/>
    </location>
</feature>
<feature type="disulfide bond" description="Redox-active" evidence="1">
    <location>
        <begin position="50"/>
        <end position="56"/>
    </location>
</feature>
<feature type="disulfide bond" description="Redox-active" evidence="1">
    <location>
        <begin position="130"/>
        <end position="133"/>
    </location>
</feature>
<feature type="disulfide bond" description="Redox-active" evidence="1">
    <location>
        <begin position="209"/>
        <end position="212"/>
    </location>
</feature>
<feature type="disulfide bond" evidence="1">
    <location>
        <begin position="231"/>
        <end position="244"/>
    </location>
</feature>
<feature type="mutagenesis site" description="Reduces enzyme activity by about 40% with dithiothreitol as in vitro reductant." evidence="2">
    <original>K</original>
    <variation>A</variation>
    <location>
        <position position="41"/>
    </location>
</feature>
<feature type="mutagenesis site" description="Reduces enzyme activity by about 20% with dithiothreitol as in vitro reductant." evidence="2">
    <original>K</original>
    <variation>E</variation>
    <location>
        <position position="41"/>
    </location>
</feature>
<feature type="mutagenesis site" description="Minor effect on enzyme activity with dithiothreitol as in vitro reductant." evidence="2">
    <original>K</original>
    <variation>R</variation>
    <location>
        <position position="41"/>
    </location>
</feature>
<feature type="mutagenesis site" description="Reduces enzyme activity by about 75% with dithiothreitol as in vitro reductant." evidence="2">
    <original>K</original>
    <variation>S</variation>
    <location>
        <position position="41"/>
    </location>
</feature>
<feature type="mutagenesis site" description="Abolishes enzyme activity, but not with dithiothreitol as in vitro reductant." evidence="1 2">
    <original>C</original>
    <variation>A</variation>
    <location>
        <position position="50"/>
    </location>
</feature>
<feature type="mutagenesis site" description="Abolishes enzyme activity, but not with dithiothreitol as in vitro reductant." evidence="1">
    <original>C</original>
    <variation>A</variation>
    <location>
        <position position="56"/>
    </location>
</feature>
<feature type="mutagenesis site" description="Reduces enzyme activity." evidence="2">
    <original>L</original>
    <variation>A</variation>
    <variation>G</variation>
    <location>
        <position position="60"/>
    </location>
</feature>
<feature type="mutagenesis site" description="Abolishes enzyme activity, also with dithiothreitol as in vitro reductant." evidence="1 2">
    <original>C</original>
    <variation>A</variation>
    <variation>S</variation>
    <location>
        <position position="130"/>
    </location>
</feature>
<feature type="mutagenesis site" description="Abolishes enzyme activity, also with dithiothreitol as in vitro reductant." evidence="1">
    <original>C</original>
    <variation>A</variation>
    <location>
        <position position="133"/>
    </location>
</feature>
<feature type="mutagenesis site" description="Abolishes enzyme activity, but not with dithiothreitol as in vitro reductant." evidence="1">
    <original>C</original>
    <variation>A</variation>
    <location>
        <position position="209"/>
    </location>
</feature>
<feature type="mutagenesis site" description="Abolishes enzyme activity, but not with dithiothreitol as in vitro reductant." evidence="1 2">
    <original>C</original>
    <variation>A</variation>
    <location>
        <position position="212"/>
    </location>
</feature>
<feature type="helix" evidence="5">
    <location>
        <begin position="21"/>
        <end position="42"/>
    </location>
</feature>
<feature type="helix" evidence="5">
    <location>
        <begin position="56"/>
        <end position="61"/>
    </location>
</feature>
<feature type="strand" evidence="5">
    <location>
        <begin position="65"/>
        <end position="67"/>
    </location>
</feature>
<feature type="helix" evidence="5">
    <location>
        <begin position="72"/>
        <end position="88"/>
    </location>
</feature>
<feature type="helix" evidence="5">
    <location>
        <begin position="96"/>
        <end position="124"/>
    </location>
</feature>
<feature type="helix" evidence="5">
    <location>
        <begin position="131"/>
        <end position="148"/>
    </location>
</feature>
<feature type="strand" evidence="5">
    <location>
        <begin position="149"/>
        <end position="151"/>
    </location>
</feature>
<feature type="helix" evidence="5">
    <location>
        <begin position="157"/>
        <end position="181"/>
    </location>
</feature>
<feature type="helix" evidence="4">
    <location>
        <begin position="187"/>
        <end position="199"/>
    </location>
</feature>
<feature type="strand" evidence="4">
    <location>
        <begin position="202"/>
        <end position="205"/>
    </location>
</feature>
<feature type="helix" evidence="4">
    <location>
        <begin position="210"/>
        <end position="219"/>
    </location>
</feature>
<feature type="helix" evidence="4">
    <location>
        <begin position="220"/>
        <end position="225"/>
    </location>
</feature>
<feature type="strand" evidence="4">
    <location>
        <begin position="228"/>
        <end position="231"/>
    </location>
</feature>
<feature type="helix" evidence="4">
    <location>
        <begin position="242"/>
        <end position="246"/>
    </location>
</feature>
<feature type="strand" evidence="4">
    <location>
        <begin position="251"/>
        <end position="257"/>
    </location>
</feature>
<feature type="strand" evidence="4">
    <location>
        <begin position="260"/>
        <end position="264"/>
    </location>
</feature>
<feature type="helix" evidence="4">
    <location>
        <begin position="268"/>
        <end position="275"/>
    </location>
</feature>
<comment type="function">
    <text evidence="1 2">Thiol-disulfide oxidoreductase that catalyzes vitamin K-dependent disulfide bond formation in periplasmic target proteins.</text>
</comment>
<comment type="activity regulation">
    <text evidence="1">Inhibited by ferulenol.</text>
</comment>
<comment type="subcellular location">
    <subcellularLocation>
        <location evidence="1 2">Membrane</location>
        <topology evidence="1 2">Multi-pass membrane protein</topology>
    </subcellularLocation>
</comment>
<comment type="domain">
    <text>Cysteine residues from the thioredoxin-like domain participate in a series of disulfide-exchange reactions that regenerate the redox-active cysteine residues in the transmembrane domain.</text>
</comment>
<comment type="similarity">
    <text evidence="3">Belongs to the VKOR family.</text>
</comment>
<accession>Q2JJF6</accession>
<protein>
    <recommendedName>
        <fullName>Vitamin K epoxide reductase homolog</fullName>
        <shortName>VKOR</shortName>
        <ecNumber>1.17.4.-</ecNumber>
    </recommendedName>
</protein>
<sequence length="283" mass="30593">MASYLKLKAQEETWLQRHSRLILAILAGLGSLLTAYLTYTKLTEQPAAFCTGDGGCDLVLSSRWAEFLGIPTAAVGLLGFLGVLALAVLPDGLPLVKRWRWPALFGLVSAMTAFEMYMLYLMVAVLRQFCMYCTTAIILVAGLGLVTVLGHRWLDGGKLAFSYILVAFLTLVTTIGVYANQVPPPSPLAVGLAAHLRQIGGTMYGAYWCPHCQDQKELFGAAFDQVPYVECSPNGPGTPQAQECTEAGITSYPTWIINGRTYTGVRSLEALAVASGYPLEEGR</sequence>
<gene>
    <name type="ordered locus">CYB_2278</name>
</gene>
<proteinExistence type="evidence at protein level"/>
<dbReference type="EC" id="1.17.4.-"/>
<dbReference type="EMBL" id="CP000240">
    <property type="protein sequence ID" value="ABD03218.1"/>
    <property type="molecule type" value="Genomic_DNA"/>
</dbReference>
<dbReference type="RefSeq" id="WP_011433847.1">
    <property type="nucleotide sequence ID" value="NC_007776.1"/>
</dbReference>
<dbReference type="PDB" id="3KP8">
    <property type="method" value="X-ray"/>
    <property type="resolution" value="1.66 A"/>
    <property type="chains" value="A=186-283"/>
</dbReference>
<dbReference type="PDB" id="3KP9">
    <property type="method" value="X-ray"/>
    <property type="resolution" value="3.60 A"/>
    <property type="chains" value="A=1-283"/>
</dbReference>
<dbReference type="PDB" id="4NV2">
    <property type="method" value="X-ray"/>
    <property type="resolution" value="3.61 A"/>
    <property type="chains" value="A=1-283"/>
</dbReference>
<dbReference type="PDB" id="4NV5">
    <property type="method" value="X-ray"/>
    <property type="resolution" value="2.79 A"/>
    <property type="chains" value="A/B=1-283"/>
</dbReference>
<dbReference type="PDB" id="4NV6">
    <property type="method" value="X-ray"/>
    <property type="resolution" value="4.19 A"/>
    <property type="chains" value="A=1-283"/>
</dbReference>
<dbReference type="PDBsum" id="3KP8"/>
<dbReference type="PDBsum" id="3KP9"/>
<dbReference type="PDBsum" id="4NV2"/>
<dbReference type="PDBsum" id="4NV5"/>
<dbReference type="PDBsum" id="4NV6"/>
<dbReference type="SMR" id="Q2JJF6"/>
<dbReference type="STRING" id="321332.CYB_2278"/>
<dbReference type="KEGG" id="cyb:CYB_2278"/>
<dbReference type="eggNOG" id="COG4243">
    <property type="taxonomic scope" value="Bacteria"/>
</dbReference>
<dbReference type="HOGENOM" id="CLU_047345_0_0_3"/>
<dbReference type="OrthoDB" id="185994at2"/>
<dbReference type="BRENDA" id="1.17.4.4">
    <property type="organism ID" value="15616"/>
</dbReference>
<dbReference type="EvolutionaryTrace" id="Q2JJF6"/>
<dbReference type="Proteomes" id="UP000001938">
    <property type="component" value="Chromosome"/>
</dbReference>
<dbReference type="GO" id="GO:0016020">
    <property type="term" value="C:membrane"/>
    <property type="evidence" value="ECO:0007669"/>
    <property type="project" value="UniProtKB-SubCell"/>
</dbReference>
<dbReference type="GO" id="GO:0016491">
    <property type="term" value="F:oxidoreductase activity"/>
    <property type="evidence" value="ECO:0007669"/>
    <property type="project" value="UniProtKB-KW"/>
</dbReference>
<dbReference type="GO" id="GO:0048038">
    <property type="term" value="F:quinone binding"/>
    <property type="evidence" value="ECO:0007669"/>
    <property type="project" value="UniProtKB-KW"/>
</dbReference>
<dbReference type="CDD" id="cd12916">
    <property type="entry name" value="VKOR_1"/>
    <property type="match status" value="1"/>
</dbReference>
<dbReference type="Gene3D" id="3.40.30.10">
    <property type="entry name" value="Glutaredoxin"/>
    <property type="match status" value="1"/>
</dbReference>
<dbReference type="Gene3D" id="1.20.1440.130">
    <property type="entry name" value="VKOR domain"/>
    <property type="match status" value="1"/>
</dbReference>
<dbReference type="InterPro" id="IPR036249">
    <property type="entry name" value="Thioredoxin-like_sf"/>
</dbReference>
<dbReference type="InterPro" id="IPR012932">
    <property type="entry name" value="VKOR"/>
</dbReference>
<dbReference type="InterPro" id="IPR044698">
    <property type="entry name" value="VKOR/LTO1"/>
</dbReference>
<dbReference type="InterPro" id="IPR038354">
    <property type="entry name" value="VKOR_sf"/>
</dbReference>
<dbReference type="PANTHER" id="PTHR34573:SF1">
    <property type="entry name" value="VITAMIN K EPOXIDE REDUCTASE DOMAIN-CONTAINING PROTEIN"/>
    <property type="match status" value="1"/>
</dbReference>
<dbReference type="PANTHER" id="PTHR34573">
    <property type="entry name" value="VKC DOMAIN-CONTAINING PROTEIN"/>
    <property type="match status" value="1"/>
</dbReference>
<dbReference type="Pfam" id="PF07884">
    <property type="entry name" value="VKOR"/>
    <property type="match status" value="1"/>
</dbReference>
<dbReference type="SMART" id="SM00756">
    <property type="entry name" value="VKc"/>
    <property type="match status" value="1"/>
</dbReference>
<dbReference type="SUPFAM" id="SSF52833">
    <property type="entry name" value="Thioredoxin-like"/>
    <property type="match status" value="1"/>
</dbReference>
<organism>
    <name type="scientific">Synechococcus sp. (strain JA-2-3B'a(2-13))</name>
    <name type="common">Cyanobacteria bacterium Yellowstone B-Prime</name>
    <dbReference type="NCBI Taxonomy" id="321332"/>
    <lineage>
        <taxon>Bacteria</taxon>
        <taxon>Bacillati</taxon>
        <taxon>Cyanobacteriota</taxon>
        <taxon>Cyanophyceae</taxon>
        <taxon>Synechococcales</taxon>
        <taxon>Synechococcaceae</taxon>
        <taxon>Synechococcus</taxon>
    </lineage>
</organism>
<evidence type="ECO:0000269" key="1">
    <source>
    </source>
</evidence>
<evidence type="ECO:0000269" key="2">
    <source>
    </source>
</evidence>
<evidence type="ECO:0000305" key="3"/>
<evidence type="ECO:0007829" key="4">
    <source>
        <dbReference type="PDB" id="3KP8"/>
    </source>
</evidence>
<evidence type="ECO:0007829" key="5">
    <source>
        <dbReference type="PDB" id="4NV5"/>
    </source>
</evidence>
<keyword id="KW-0002">3D-structure</keyword>
<keyword id="KW-1015">Disulfide bond</keyword>
<keyword id="KW-0472">Membrane</keyword>
<keyword id="KW-0560">Oxidoreductase</keyword>
<keyword id="KW-0874">Quinone</keyword>
<keyword id="KW-0676">Redox-active center</keyword>
<keyword id="KW-1185">Reference proteome</keyword>
<keyword id="KW-0812">Transmembrane</keyword>
<keyword id="KW-1133">Transmembrane helix</keyword>